<protein>
    <recommendedName>
        <fullName>Exportin-2</fullName>
        <shortName>Exp2</shortName>
    </recommendedName>
    <alternativeName>
        <fullName>Chromosome segregation 1-like protein</fullName>
    </alternativeName>
    <alternativeName>
        <fullName>Importin-alpha re-exporter</fullName>
    </alternativeName>
</protein>
<sequence>MELSEGNLQGLTEYLKKTLDPDPAVRRPAEKYLESVEGNQNYPLLLLTLVERSQDNVIKVCSAVTFKNYIKRNWRIVEDESNKICEADRIAVKSSIINLMLRSPEQIQKQLSDAISIIGREDFPQKWPNLLTEMVNRFQSGDFHVINGVLHTAHSLFKRYRHEFKSSELWTEIKLVLDTFAGPLTDLFKATIELCNTHANDVGALKVLFSSLNLIAKLFHSLNFQDLPEFFEDNMETWMTNFHNLLTLDNKLLQTDDEEEAGLLELLKSQICDNAALYAQKYDEEFQPYLPRFVTAIWNLLVTTGQEVKYDLLVSNAIQFLASVCERPHYKNLFEDPSTLTSICEKVIVPNMEFRAADEEAFEDNSEEYIRRDLEGSDIDTRRRAACDLVRGLCKFFEGPVTNIFSGYVNSMLQEYAKNPSVNWKHKDAAIYLVTSLASKAQTQKHGITQANELVNLTEFFVNHILPDLKSANINQYPVLKADGIKYIMFFRSQIPREQLLVTIPLLIAYLQAESIVVHTYAAHALERFFTMKGAATTTLIVAADMMPYVELLLANLFKALSLPGSTENEYIMKAIMRSFSLLQEAIIPYIPSVISQLTQKLLAVSKNPSKPHFNHYMFEAICLSIRITCRANPAAVASFEDALFLVFTEILQSDVQEFIPYVFQVMSLLLEIHTTDIPPSYMALFPHLLQPVLWERTGNIPPLVRLLQAYLERGATTIAASASDKIPGLLGVFQKLIASKANDHQGFYLLNSIIEHLPAECIEQYKRQIFIVLFQRLQSSKTTKFVKSFLVFLNLFCIKFGAIALQEMFDSIQPKMFGMVVEKIIIPEIQKVSGPIEKKICAVGLTKVLTECPVMMDTEYTKLWTPLLQALIGLFELPEDDTIPDDEHFIDIEDTPGYQAAFSQLAFAGKKEHDPIGEMVNNPKILLAQSLHKLSTACPGRVPSMISTSLNAEALQFLQGYLQAGSVSLV</sequence>
<gene>
    <name type="primary">cse1l</name>
    <name type="synonym">xpo2</name>
</gene>
<reference key="1">
    <citation type="submission" date="2004-06" db="EMBL/GenBank/DDBJ databases">
        <authorList>
            <consortium name="NIH - Xenopus Gene Collection (XGC) project"/>
        </authorList>
    </citation>
    <scope>NUCLEOTIDE SEQUENCE [LARGE SCALE MRNA]</scope>
    <source>
        <tissue>Oocyte</tissue>
    </source>
</reference>
<evidence type="ECO:0000250" key="1">
    <source>
        <dbReference type="UniProtKB" id="P55060"/>
    </source>
</evidence>
<evidence type="ECO:0000255" key="2">
    <source>
        <dbReference type="PROSITE-ProRule" id="PRU00115"/>
    </source>
</evidence>
<evidence type="ECO:0000305" key="3"/>
<keyword id="KW-0963">Cytoplasm</keyword>
<keyword id="KW-0539">Nucleus</keyword>
<keyword id="KW-0653">Protein transport</keyword>
<keyword id="KW-1185">Reference proteome</keyword>
<keyword id="KW-0813">Transport</keyword>
<comment type="function">
    <text evidence="1">Export receptor for importin alpha. Mediates importin-alpha re-export from the nucleus to the cytoplasm after import substrates have been released into the nucleoplasm (By similarity).</text>
</comment>
<comment type="subcellular location">
    <subcellularLocation>
        <location evidence="1">Cytoplasm</location>
    </subcellularLocation>
    <subcellularLocation>
        <location evidence="1">Nucleus</location>
    </subcellularLocation>
    <text evidence="1">Shuttles between the nucleus and the cytoplasm.</text>
</comment>
<comment type="similarity">
    <text evidence="3">Belongs to the XPO2/CSE1 family.</text>
</comment>
<accession>Q6GMY9</accession>
<name>XPO2_XENLA</name>
<organism>
    <name type="scientific">Xenopus laevis</name>
    <name type="common">African clawed frog</name>
    <dbReference type="NCBI Taxonomy" id="8355"/>
    <lineage>
        <taxon>Eukaryota</taxon>
        <taxon>Metazoa</taxon>
        <taxon>Chordata</taxon>
        <taxon>Craniata</taxon>
        <taxon>Vertebrata</taxon>
        <taxon>Euteleostomi</taxon>
        <taxon>Amphibia</taxon>
        <taxon>Batrachia</taxon>
        <taxon>Anura</taxon>
        <taxon>Pipoidea</taxon>
        <taxon>Pipidae</taxon>
        <taxon>Xenopodinae</taxon>
        <taxon>Xenopus</taxon>
        <taxon>Xenopus</taxon>
    </lineage>
</organism>
<dbReference type="EMBL" id="BC073735">
    <property type="protein sequence ID" value="AAH73735.1"/>
    <property type="molecule type" value="mRNA"/>
</dbReference>
<dbReference type="RefSeq" id="NP_001086035.1">
    <property type="nucleotide sequence ID" value="NM_001092566.1"/>
</dbReference>
<dbReference type="SMR" id="Q6GMY9"/>
<dbReference type="BioGRID" id="102627">
    <property type="interactions" value="2"/>
</dbReference>
<dbReference type="IntAct" id="Q6GMY9">
    <property type="interactions" value="1"/>
</dbReference>
<dbReference type="DNASU" id="444464"/>
<dbReference type="GeneID" id="444464"/>
<dbReference type="KEGG" id="xla:444464"/>
<dbReference type="AGR" id="Xenbase:XB-GENE-5802416"/>
<dbReference type="CTD" id="444464"/>
<dbReference type="Xenbase" id="XB-GENE-5802416">
    <property type="gene designation" value="cse1l.L"/>
</dbReference>
<dbReference type="OrthoDB" id="3268246at2759"/>
<dbReference type="CD-CODE" id="78E86D56">
    <property type="entry name" value="Mitochondrial cloud"/>
</dbReference>
<dbReference type="Proteomes" id="UP000186698">
    <property type="component" value="Chromosome 9_10L"/>
</dbReference>
<dbReference type="Bgee" id="444464">
    <property type="expression patterns" value="Expressed in ovary and 19 other cell types or tissues"/>
</dbReference>
<dbReference type="GO" id="GO:0005829">
    <property type="term" value="C:cytosol"/>
    <property type="evidence" value="ECO:0000318"/>
    <property type="project" value="GO_Central"/>
</dbReference>
<dbReference type="GO" id="GO:0005635">
    <property type="term" value="C:nuclear envelope"/>
    <property type="evidence" value="ECO:0000318"/>
    <property type="project" value="GO_Central"/>
</dbReference>
<dbReference type="GO" id="GO:0005049">
    <property type="term" value="F:nuclear export signal receptor activity"/>
    <property type="evidence" value="ECO:0000318"/>
    <property type="project" value="GO_Central"/>
</dbReference>
<dbReference type="GO" id="GO:0031267">
    <property type="term" value="F:small GTPase binding"/>
    <property type="evidence" value="ECO:0007669"/>
    <property type="project" value="InterPro"/>
</dbReference>
<dbReference type="GO" id="GO:0006611">
    <property type="term" value="P:protein export from nucleus"/>
    <property type="evidence" value="ECO:0000318"/>
    <property type="project" value="GO_Central"/>
</dbReference>
<dbReference type="GO" id="GO:0006606">
    <property type="term" value="P:protein import into nucleus"/>
    <property type="evidence" value="ECO:0000318"/>
    <property type="project" value="GO_Central"/>
</dbReference>
<dbReference type="FunFam" id="1.25.10.10:FF:000057">
    <property type="entry name" value="Exportin-2 isoform 1"/>
    <property type="match status" value="1"/>
</dbReference>
<dbReference type="Gene3D" id="1.25.10.10">
    <property type="entry name" value="Leucine-rich Repeat Variant"/>
    <property type="match status" value="1"/>
</dbReference>
<dbReference type="InterPro" id="IPR011989">
    <property type="entry name" value="ARM-like"/>
</dbReference>
<dbReference type="InterPro" id="IPR016024">
    <property type="entry name" value="ARM-type_fold"/>
</dbReference>
<dbReference type="InterPro" id="IPR001494">
    <property type="entry name" value="Importin-beta_N"/>
</dbReference>
<dbReference type="InterPro" id="IPR005043">
    <property type="entry name" value="XPO2_C"/>
</dbReference>
<dbReference type="InterPro" id="IPR013713">
    <property type="entry name" value="XPO2_central"/>
</dbReference>
<dbReference type="PANTHER" id="PTHR10997:SF8">
    <property type="entry name" value="EXPORTIN-2"/>
    <property type="match status" value="1"/>
</dbReference>
<dbReference type="PANTHER" id="PTHR10997">
    <property type="entry name" value="IMPORTIN-7, 8, 11"/>
    <property type="match status" value="1"/>
</dbReference>
<dbReference type="Pfam" id="PF03378">
    <property type="entry name" value="CAS_CSE1"/>
    <property type="match status" value="1"/>
</dbReference>
<dbReference type="Pfam" id="PF08506">
    <property type="entry name" value="Cse1"/>
    <property type="match status" value="1"/>
</dbReference>
<dbReference type="Pfam" id="PF03810">
    <property type="entry name" value="IBN_N"/>
    <property type="match status" value="1"/>
</dbReference>
<dbReference type="SMART" id="SM00913">
    <property type="entry name" value="IBN_N"/>
    <property type="match status" value="1"/>
</dbReference>
<dbReference type="SUPFAM" id="SSF48371">
    <property type="entry name" value="ARM repeat"/>
    <property type="match status" value="1"/>
</dbReference>
<dbReference type="PROSITE" id="PS50166">
    <property type="entry name" value="IMPORTIN_B_NT"/>
    <property type="match status" value="1"/>
</dbReference>
<proteinExistence type="evidence at transcript level"/>
<feature type="chain" id="PRO_0000237682" description="Exportin-2">
    <location>
        <begin position="1"/>
        <end position="971"/>
    </location>
</feature>
<feature type="domain" description="Importin N-terminal" evidence="2">
    <location>
        <begin position="29"/>
        <end position="102"/>
    </location>
</feature>